<protein>
    <recommendedName>
        <fullName>Non-specific lipid-transfer protein P5</fullName>
        <shortName>LTP P5</shortName>
    </recommendedName>
</protein>
<evidence type="ECO:0000250" key="1"/>
<evidence type="ECO:0000250" key="2">
    <source>
        <dbReference type="UniProtKB" id="Q42952"/>
    </source>
</evidence>
<evidence type="ECO:0000255" key="3"/>
<evidence type="ECO:0000269" key="4">
    <source ref="1"/>
</evidence>
<evidence type="ECO:0000305" key="5"/>
<proteinExistence type="evidence at protein level"/>
<accession>P85105</accession>
<comment type="function">
    <text evidence="1">Plant non-specific lipid-transfer proteins transfer phospholipids as well as galactolipids across membranes. May play a role in wax or cutin deposition in the cell walls of expanding epidermal cells and certain secretory tissues (By similarity).</text>
</comment>
<comment type="subcellular location">
    <subcellularLocation>
        <location evidence="4">Secreted</location>
    </subcellularLocation>
</comment>
<comment type="mass spectrometry"/>
<comment type="similarity">
    <text evidence="3">Belongs to the plant LTP family.</text>
</comment>
<name>NLTP5_VITSX</name>
<keyword id="KW-0903">Direct protein sequencing</keyword>
<keyword id="KW-1015">Disulfide bond</keyword>
<keyword id="KW-0446">Lipid-binding</keyword>
<keyword id="KW-0964">Secreted</keyword>
<keyword id="KW-0813">Transport</keyword>
<feature type="chain" id="PRO_0000284764" description="Non-specific lipid-transfer protein P5">
    <location>
        <begin position="1"/>
        <end position="91"/>
    </location>
</feature>
<feature type="disulfide bond" evidence="2">
    <location>
        <begin position="3"/>
        <end position="50"/>
    </location>
</feature>
<feature type="disulfide bond" evidence="2">
    <location>
        <begin position="13"/>
        <end position="27"/>
    </location>
</feature>
<feature type="disulfide bond" evidence="2">
    <location>
        <begin position="28"/>
        <end position="73"/>
    </location>
</feature>
<feature type="disulfide bond" evidence="2">
    <location>
        <begin position="48"/>
        <end position="87"/>
    </location>
</feature>
<dbReference type="SMR" id="P85105"/>
<dbReference type="GO" id="GO:0005576">
    <property type="term" value="C:extracellular region"/>
    <property type="evidence" value="ECO:0007669"/>
    <property type="project" value="UniProtKB-SubCell"/>
</dbReference>
<dbReference type="GO" id="GO:0008289">
    <property type="term" value="F:lipid binding"/>
    <property type="evidence" value="ECO:0007669"/>
    <property type="project" value="UniProtKB-KW"/>
</dbReference>
<dbReference type="GO" id="GO:0006869">
    <property type="term" value="P:lipid transport"/>
    <property type="evidence" value="ECO:0007669"/>
    <property type="project" value="InterPro"/>
</dbReference>
<dbReference type="CDD" id="cd01960">
    <property type="entry name" value="nsLTP1"/>
    <property type="match status" value="1"/>
</dbReference>
<dbReference type="FunFam" id="1.10.110.10:FF:000002">
    <property type="entry name" value="Non-specific lipid-transfer protein"/>
    <property type="match status" value="1"/>
</dbReference>
<dbReference type="Gene3D" id="1.10.110.10">
    <property type="entry name" value="Plant lipid-transfer and hydrophobic proteins"/>
    <property type="match status" value="1"/>
</dbReference>
<dbReference type="InterPro" id="IPR036312">
    <property type="entry name" value="Bifun_inhib/LTP/seed_sf"/>
</dbReference>
<dbReference type="InterPro" id="IPR016140">
    <property type="entry name" value="Bifunc_inhib/LTP/seed_store"/>
</dbReference>
<dbReference type="InterPro" id="IPR000528">
    <property type="entry name" value="Plant_nsLTP"/>
</dbReference>
<dbReference type="PANTHER" id="PTHR33076">
    <property type="entry name" value="NON-SPECIFIC LIPID-TRANSFER PROTEIN 2-RELATED"/>
    <property type="match status" value="1"/>
</dbReference>
<dbReference type="Pfam" id="PF00234">
    <property type="entry name" value="Tryp_alpha_amyl"/>
    <property type="match status" value="1"/>
</dbReference>
<dbReference type="PRINTS" id="PR00382">
    <property type="entry name" value="LIPIDTRNSFER"/>
</dbReference>
<dbReference type="SMART" id="SM00499">
    <property type="entry name" value="AAI"/>
    <property type="match status" value="1"/>
</dbReference>
<dbReference type="SUPFAM" id="SSF47699">
    <property type="entry name" value="Bifunctional inhibitor/lipid-transfer protein/seed storage 2S albumin"/>
    <property type="match status" value="1"/>
</dbReference>
<dbReference type="PROSITE" id="PS00597">
    <property type="entry name" value="PLANT_LTP"/>
    <property type="match status" value="1"/>
</dbReference>
<reference evidence="5" key="1">
    <citation type="submission" date="2007-03" db="UniProtKB">
        <authorList>
            <person name="Girault T."/>
            <person name="Francois J."/>
            <person name="Rogniaux H."/>
            <person name="Delrot S."/>
            <person name="Lemoine R."/>
            <person name="Coutos-Thevenot P."/>
            <person name="Gomes E."/>
        </authorList>
    </citation>
    <scope>PROTEIN SEQUENCE</scope>
    <scope>SUBCELLULAR LOCATION</scope>
    <scope>MASS SPECTROMETRY</scope>
    <source>
        <strain>V.berlandieri X V.vinifera cv. 41B</strain>
    </source>
</reference>
<sequence>LSCGDVATQLAPCINYLRSAGPLPVACCNGVKNLKNSAATTQDRRTACKCLINASKSISGVNFGLAAGLPGKCGVNIPYKISPSTNCDQVN</sequence>
<organism>
    <name type="scientific">Vitis sp.</name>
    <name type="common">Grape</name>
    <dbReference type="NCBI Taxonomy" id="3604"/>
    <lineage>
        <taxon>Eukaryota</taxon>
        <taxon>Viridiplantae</taxon>
        <taxon>Streptophyta</taxon>
        <taxon>Embryophyta</taxon>
        <taxon>Tracheophyta</taxon>
        <taxon>Spermatophyta</taxon>
        <taxon>Magnoliopsida</taxon>
        <taxon>eudicotyledons</taxon>
        <taxon>Gunneridae</taxon>
        <taxon>Pentapetalae</taxon>
        <taxon>rosids</taxon>
        <taxon>Vitales</taxon>
        <taxon>Vitaceae</taxon>
        <taxon>Viteae</taxon>
        <taxon>Vitis</taxon>
    </lineage>
</organism>